<keyword id="KW-0963">Cytoplasm</keyword>
<keyword id="KW-0539">Nucleus</keyword>
<keyword id="KW-0647">Proteasome</keyword>
<keyword id="KW-1185">Reference proteome</keyword>
<sequence length="232" mass="25666">MDSDYSFSLTTFSPSGKLVQIEHALQAAASGGSAIGIKAKNGVVLITEKKLHSLVDVTSVQKISMITENIGLVYAGMGPDSRVLIKKARKESEKYYKQYKEKIPVLQLVRELASIMQEFTQSGGVRPFGVSLLVAGFDEKGPHLYQVDPSGSYFAWKATAIGKNMVSSKTFLEKRYSDDLEIEDAIQTALITIKEGFETQLTEFNMELAIIGKNQEFKILTPAQIKDYLLNL</sequence>
<comment type="function">
    <text evidence="1">The proteasome is a multicatalytic proteinase complex which is characterized by its ability to cleave peptides with Arg, Phe, Tyr, Leu, and Glu adjacent to the leaving group at neutral or slightly basic pH. The proteasome has an ATP-dependent proteolytic activity (By similarity).</text>
</comment>
<comment type="subunit">
    <text evidence="1">The 26S proteasome consists of a 20S proteasome core and two 19S regulatory subunits. The 20S proteasome core is composed of 28 subunits that are arranged in four stacked rings, resulting in a barrel-shaped structure. The two end rings are each formed by seven alpha subunits, and the two central rings are each formed by seven beta subunits. The catalytic chamber with the active sites is on the inside of the barrel (By similarity).</text>
</comment>
<comment type="subcellular location">
    <subcellularLocation>
        <location evidence="1">Cytoplasm</location>
    </subcellularLocation>
    <subcellularLocation>
        <location evidence="1">Nucleus</location>
    </subcellularLocation>
</comment>
<comment type="similarity">
    <text evidence="2">Belongs to the peptidase T1A family.</text>
</comment>
<evidence type="ECO:0000250" key="1"/>
<evidence type="ECO:0000255" key="2">
    <source>
        <dbReference type="PROSITE-ProRule" id="PRU00808"/>
    </source>
</evidence>
<accession>Q54DM7</accession>
<gene>
    <name type="primary">psmA2</name>
    <name type="ORF">DDB_G0292122</name>
</gene>
<name>PSA2_DICDI</name>
<dbReference type="EMBL" id="AAFI02000187">
    <property type="protein sequence ID" value="EAL61417.1"/>
    <property type="molecule type" value="Genomic_DNA"/>
</dbReference>
<dbReference type="RefSeq" id="XP_629845.1">
    <property type="nucleotide sequence ID" value="XM_629843.1"/>
</dbReference>
<dbReference type="SMR" id="Q54DM7"/>
<dbReference type="FunCoup" id="Q54DM7">
    <property type="interactions" value="1094"/>
</dbReference>
<dbReference type="STRING" id="44689.Q54DM7"/>
<dbReference type="PaxDb" id="44689-DDB0232935"/>
<dbReference type="EnsemblProtists" id="EAL61417">
    <property type="protein sequence ID" value="EAL61417"/>
    <property type="gene ID" value="DDB_G0292122"/>
</dbReference>
<dbReference type="GeneID" id="8628525"/>
<dbReference type="KEGG" id="ddi:DDB_G0292122"/>
<dbReference type="dictyBase" id="DDB_G0292122">
    <property type="gene designation" value="psmA2"/>
</dbReference>
<dbReference type="VEuPathDB" id="AmoebaDB:DDB_G0292122"/>
<dbReference type="eggNOG" id="KOG0181">
    <property type="taxonomic scope" value="Eukaryota"/>
</dbReference>
<dbReference type="HOGENOM" id="CLU_035750_4_1_1"/>
<dbReference type="InParanoid" id="Q54DM7"/>
<dbReference type="OMA" id="ATCIGKD"/>
<dbReference type="PhylomeDB" id="Q54DM7"/>
<dbReference type="Reactome" id="R-DDI-1236978">
    <property type="pathway name" value="Cross-presentation of soluble exogenous antigens (endosomes)"/>
</dbReference>
<dbReference type="Reactome" id="R-DDI-174084">
    <property type="pathway name" value="Autodegradation of Cdh1 by Cdh1:APC/C"/>
</dbReference>
<dbReference type="Reactome" id="R-DDI-174154">
    <property type="pathway name" value="APC/C:Cdc20 mediated degradation of Securin"/>
</dbReference>
<dbReference type="Reactome" id="R-DDI-174178">
    <property type="pathway name" value="APC/C:Cdh1 mediated degradation of Cdc20 and other APC/C:Cdh1 targeted proteins in late mitosis/early G1"/>
</dbReference>
<dbReference type="Reactome" id="R-DDI-2467813">
    <property type="pathway name" value="Separation of Sister Chromatids"/>
</dbReference>
<dbReference type="Reactome" id="R-DDI-349425">
    <property type="pathway name" value="Autodegradation of the E3 ubiquitin ligase COP1"/>
</dbReference>
<dbReference type="Reactome" id="R-DDI-382556">
    <property type="pathway name" value="ABC-family proteins mediated transport"/>
</dbReference>
<dbReference type="Reactome" id="R-DDI-450408">
    <property type="pathway name" value="AUF1 (hnRNP D0) binds and destabilizes mRNA"/>
</dbReference>
<dbReference type="Reactome" id="R-DDI-4641258">
    <property type="pathway name" value="Degradation of DVL"/>
</dbReference>
<dbReference type="Reactome" id="R-DDI-5632684">
    <property type="pathway name" value="Hedgehog 'on' state"/>
</dbReference>
<dbReference type="Reactome" id="R-DDI-5658442">
    <property type="pathway name" value="Regulation of RAS by GAPs"/>
</dbReference>
<dbReference type="Reactome" id="R-DDI-5687128">
    <property type="pathway name" value="MAPK6/MAPK4 signaling"/>
</dbReference>
<dbReference type="Reactome" id="R-DDI-5689603">
    <property type="pathway name" value="UCH proteinases"/>
</dbReference>
<dbReference type="Reactome" id="R-DDI-5689880">
    <property type="pathway name" value="Ub-specific processing proteases"/>
</dbReference>
<dbReference type="Reactome" id="R-DDI-6798695">
    <property type="pathway name" value="Neutrophil degranulation"/>
</dbReference>
<dbReference type="Reactome" id="R-DDI-68949">
    <property type="pathway name" value="Orc1 removal from chromatin"/>
</dbReference>
<dbReference type="Reactome" id="R-DDI-69017">
    <property type="pathway name" value="CDK-mediated phosphorylation and removal of Cdc6"/>
</dbReference>
<dbReference type="Reactome" id="R-DDI-69601">
    <property type="pathway name" value="Ubiquitin Mediated Degradation of Phosphorylated Cdc25A"/>
</dbReference>
<dbReference type="Reactome" id="R-DDI-8854050">
    <property type="pathway name" value="FBXL7 down-regulates AURKA during mitotic entry and in early mitosis"/>
</dbReference>
<dbReference type="Reactome" id="R-DDI-8948751">
    <property type="pathway name" value="Regulation of PTEN stability and activity"/>
</dbReference>
<dbReference type="Reactome" id="R-DDI-8951664">
    <property type="pathway name" value="Neddylation"/>
</dbReference>
<dbReference type="Reactome" id="R-DDI-9755511">
    <property type="pathway name" value="KEAP1-NFE2L2 pathway"/>
</dbReference>
<dbReference type="Reactome" id="R-DDI-983168">
    <property type="pathway name" value="Antigen processing: Ubiquitination &amp; Proteasome degradation"/>
</dbReference>
<dbReference type="Reactome" id="R-DDI-9907900">
    <property type="pathway name" value="Proteasome assembly"/>
</dbReference>
<dbReference type="PRO" id="PR:Q54DM7"/>
<dbReference type="Proteomes" id="UP000002195">
    <property type="component" value="Chromosome 6"/>
</dbReference>
<dbReference type="GO" id="GO:0005737">
    <property type="term" value="C:cytoplasm"/>
    <property type="evidence" value="ECO:0000353"/>
    <property type="project" value="dictyBase"/>
</dbReference>
<dbReference type="GO" id="GO:0005634">
    <property type="term" value="C:nucleus"/>
    <property type="evidence" value="ECO:0000353"/>
    <property type="project" value="dictyBase"/>
</dbReference>
<dbReference type="GO" id="GO:0019773">
    <property type="term" value="C:proteasome core complex, alpha-subunit complex"/>
    <property type="evidence" value="ECO:0000314"/>
    <property type="project" value="dictyBase"/>
</dbReference>
<dbReference type="GO" id="GO:0010498">
    <property type="term" value="P:proteasomal protein catabolic process"/>
    <property type="evidence" value="ECO:0000314"/>
    <property type="project" value="dictyBase"/>
</dbReference>
<dbReference type="GO" id="GO:0043161">
    <property type="term" value="P:proteasome-mediated ubiquitin-dependent protein catabolic process"/>
    <property type="evidence" value="ECO:0000318"/>
    <property type="project" value="GO_Central"/>
</dbReference>
<dbReference type="CDD" id="cd03750">
    <property type="entry name" value="proteasome_alpha_type_2"/>
    <property type="match status" value="1"/>
</dbReference>
<dbReference type="FunFam" id="3.60.20.10:FF:000028">
    <property type="entry name" value="Proteasome subunit alpha type"/>
    <property type="match status" value="1"/>
</dbReference>
<dbReference type="Gene3D" id="3.60.20.10">
    <property type="entry name" value="Glutamine Phosphoribosylpyrophosphate, subunit 1, domain 1"/>
    <property type="match status" value="1"/>
</dbReference>
<dbReference type="InterPro" id="IPR029055">
    <property type="entry name" value="Ntn_hydrolases_N"/>
</dbReference>
<dbReference type="InterPro" id="IPR050115">
    <property type="entry name" value="Proteasome_alpha"/>
</dbReference>
<dbReference type="InterPro" id="IPR023332">
    <property type="entry name" value="Proteasome_alpha-type"/>
</dbReference>
<dbReference type="InterPro" id="IPR000426">
    <property type="entry name" value="Proteasome_asu_N"/>
</dbReference>
<dbReference type="InterPro" id="IPR001353">
    <property type="entry name" value="Proteasome_sua/b"/>
</dbReference>
<dbReference type="NCBIfam" id="NF003075">
    <property type="entry name" value="PRK03996.1"/>
    <property type="match status" value="1"/>
</dbReference>
<dbReference type="PANTHER" id="PTHR11599">
    <property type="entry name" value="PROTEASOME SUBUNIT ALPHA/BETA"/>
    <property type="match status" value="1"/>
</dbReference>
<dbReference type="Pfam" id="PF00227">
    <property type="entry name" value="Proteasome"/>
    <property type="match status" value="1"/>
</dbReference>
<dbReference type="Pfam" id="PF10584">
    <property type="entry name" value="Proteasome_A_N"/>
    <property type="match status" value="1"/>
</dbReference>
<dbReference type="SMART" id="SM00948">
    <property type="entry name" value="Proteasome_A_N"/>
    <property type="match status" value="1"/>
</dbReference>
<dbReference type="SUPFAM" id="SSF56235">
    <property type="entry name" value="N-terminal nucleophile aminohydrolases (Ntn hydrolases)"/>
    <property type="match status" value="1"/>
</dbReference>
<dbReference type="PROSITE" id="PS00388">
    <property type="entry name" value="PROTEASOME_ALPHA_1"/>
    <property type="match status" value="1"/>
</dbReference>
<dbReference type="PROSITE" id="PS51475">
    <property type="entry name" value="PROTEASOME_ALPHA_2"/>
    <property type="match status" value="1"/>
</dbReference>
<proteinExistence type="inferred from homology"/>
<organism>
    <name type="scientific">Dictyostelium discoideum</name>
    <name type="common">Social amoeba</name>
    <dbReference type="NCBI Taxonomy" id="44689"/>
    <lineage>
        <taxon>Eukaryota</taxon>
        <taxon>Amoebozoa</taxon>
        <taxon>Evosea</taxon>
        <taxon>Eumycetozoa</taxon>
        <taxon>Dictyostelia</taxon>
        <taxon>Dictyosteliales</taxon>
        <taxon>Dictyosteliaceae</taxon>
        <taxon>Dictyostelium</taxon>
    </lineage>
</organism>
<protein>
    <recommendedName>
        <fullName>Proteasome subunit alpha type-2</fullName>
    </recommendedName>
</protein>
<feature type="chain" id="PRO_0000328485" description="Proteasome subunit alpha type-2">
    <location>
        <begin position="1"/>
        <end position="232"/>
    </location>
</feature>
<reference key="1">
    <citation type="journal article" date="2005" name="Nature">
        <title>The genome of the social amoeba Dictyostelium discoideum.</title>
        <authorList>
            <person name="Eichinger L."/>
            <person name="Pachebat J.A."/>
            <person name="Gloeckner G."/>
            <person name="Rajandream M.A."/>
            <person name="Sucgang R."/>
            <person name="Berriman M."/>
            <person name="Song J."/>
            <person name="Olsen R."/>
            <person name="Szafranski K."/>
            <person name="Xu Q."/>
            <person name="Tunggal B."/>
            <person name="Kummerfeld S."/>
            <person name="Madera M."/>
            <person name="Konfortov B.A."/>
            <person name="Rivero F."/>
            <person name="Bankier A.T."/>
            <person name="Lehmann R."/>
            <person name="Hamlin N."/>
            <person name="Davies R."/>
            <person name="Gaudet P."/>
            <person name="Fey P."/>
            <person name="Pilcher K."/>
            <person name="Chen G."/>
            <person name="Saunders D."/>
            <person name="Sodergren E.J."/>
            <person name="Davis P."/>
            <person name="Kerhornou A."/>
            <person name="Nie X."/>
            <person name="Hall N."/>
            <person name="Anjard C."/>
            <person name="Hemphill L."/>
            <person name="Bason N."/>
            <person name="Farbrother P."/>
            <person name="Desany B."/>
            <person name="Just E."/>
            <person name="Morio T."/>
            <person name="Rost R."/>
            <person name="Churcher C.M."/>
            <person name="Cooper J."/>
            <person name="Haydock S."/>
            <person name="van Driessche N."/>
            <person name="Cronin A."/>
            <person name="Goodhead I."/>
            <person name="Muzny D.M."/>
            <person name="Mourier T."/>
            <person name="Pain A."/>
            <person name="Lu M."/>
            <person name="Harper D."/>
            <person name="Lindsay R."/>
            <person name="Hauser H."/>
            <person name="James K.D."/>
            <person name="Quiles M."/>
            <person name="Madan Babu M."/>
            <person name="Saito T."/>
            <person name="Buchrieser C."/>
            <person name="Wardroper A."/>
            <person name="Felder M."/>
            <person name="Thangavelu M."/>
            <person name="Johnson D."/>
            <person name="Knights A."/>
            <person name="Loulseged H."/>
            <person name="Mungall K.L."/>
            <person name="Oliver K."/>
            <person name="Price C."/>
            <person name="Quail M.A."/>
            <person name="Urushihara H."/>
            <person name="Hernandez J."/>
            <person name="Rabbinowitsch E."/>
            <person name="Steffen D."/>
            <person name="Sanders M."/>
            <person name="Ma J."/>
            <person name="Kohara Y."/>
            <person name="Sharp S."/>
            <person name="Simmonds M.N."/>
            <person name="Spiegler S."/>
            <person name="Tivey A."/>
            <person name="Sugano S."/>
            <person name="White B."/>
            <person name="Walker D."/>
            <person name="Woodward J.R."/>
            <person name="Winckler T."/>
            <person name="Tanaka Y."/>
            <person name="Shaulsky G."/>
            <person name="Schleicher M."/>
            <person name="Weinstock G.M."/>
            <person name="Rosenthal A."/>
            <person name="Cox E.C."/>
            <person name="Chisholm R.L."/>
            <person name="Gibbs R.A."/>
            <person name="Loomis W.F."/>
            <person name="Platzer M."/>
            <person name="Kay R.R."/>
            <person name="Williams J.G."/>
            <person name="Dear P.H."/>
            <person name="Noegel A.A."/>
            <person name="Barrell B.G."/>
            <person name="Kuspa A."/>
        </authorList>
    </citation>
    <scope>NUCLEOTIDE SEQUENCE [LARGE SCALE GENOMIC DNA]</scope>
    <source>
        <strain>AX4</strain>
    </source>
</reference>